<gene>
    <name evidence="1" type="primary">trpC</name>
    <name type="ordered locus">SERP0940</name>
</gene>
<proteinExistence type="inferred from homology"/>
<dbReference type="EC" id="4.1.1.48" evidence="1"/>
<dbReference type="EMBL" id="CP000029">
    <property type="protein sequence ID" value="AAW54337.1"/>
    <property type="molecule type" value="Genomic_DNA"/>
</dbReference>
<dbReference type="RefSeq" id="WP_001831115.1">
    <property type="nucleotide sequence ID" value="NC_002976.3"/>
</dbReference>
<dbReference type="SMR" id="Q5HPH2"/>
<dbReference type="STRING" id="176279.SERP0940"/>
<dbReference type="GeneID" id="50018822"/>
<dbReference type="KEGG" id="ser:SERP0940"/>
<dbReference type="eggNOG" id="COG0134">
    <property type="taxonomic scope" value="Bacteria"/>
</dbReference>
<dbReference type="HOGENOM" id="CLU_034247_2_1_9"/>
<dbReference type="UniPathway" id="UPA00035">
    <property type="reaction ID" value="UER00043"/>
</dbReference>
<dbReference type="Proteomes" id="UP000000531">
    <property type="component" value="Chromosome"/>
</dbReference>
<dbReference type="GO" id="GO:0004425">
    <property type="term" value="F:indole-3-glycerol-phosphate synthase activity"/>
    <property type="evidence" value="ECO:0007669"/>
    <property type="project" value="UniProtKB-UniRule"/>
</dbReference>
<dbReference type="GO" id="GO:0004640">
    <property type="term" value="F:phosphoribosylanthranilate isomerase activity"/>
    <property type="evidence" value="ECO:0007669"/>
    <property type="project" value="TreeGrafter"/>
</dbReference>
<dbReference type="GO" id="GO:0000162">
    <property type="term" value="P:L-tryptophan biosynthetic process"/>
    <property type="evidence" value="ECO:0007669"/>
    <property type="project" value="UniProtKB-UniRule"/>
</dbReference>
<dbReference type="CDD" id="cd00331">
    <property type="entry name" value="IGPS"/>
    <property type="match status" value="1"/>
</dbReference>
<dbReference type="FunFam" id="3.20.20.70:FF:000024">
    <property type="entry name" value="Indole-3-glycerol phosphate synthase"/>
    <property type="match status" value="1"/>
</dbReference>
<dbReference type="Gene3D" id="3.20.20.70">
    <property type="entry name" value="Aldolase class I"/>
    <property type="match status" value="1"/>
</dbReference>
<dbReference type="HAMAP" id="MF_00134_B">
    <property type="entry name" value="IGPS_B"/>
    <property type="match status" value="1"/>
</dbReference>
<dbReference type="InterPro" id="IPR013785">
    <property type="entry name" value="Aldolase_TIM"/>
</dbReference>
<dbReference type="InterPro" id="IPR045186">
    <property type="entry name" value="Indole-3-glycerol_P_synth"/>
</dbReference>
<dbReference type="InterPro" id="IPR013798">
    <property type="entry name" value="Indole-3-glycerol_P_synth_dom"/>
</dbReference>
<dbReference type="InterPro" id="IPR001468">
    <property type="entry name" value="Indole-3-GlycerolPSynthase_CS"/>
</dbReference>
<dbReference type="InterPro" id="IPR011060">
    <property type="entry name" value="RibuloseP-bd_barrel"/>
</dbReference>
<dbReference type="NCBIfam" id="NF001371">
    <property type="entry name" value="PRK00278.1-3"/>
    <property type="match status" value="1"/>
</dbReference>
<dbReference type="PANTHER" id="PTHR22854:SF2">
    <property type="entry name" value="INDOLE-3-GLYCEROL-PHOSPHATE SYNTHASE"/>
    <property type="match status" value="1"/>
</dbReference>
<dbReference type="PANTHER" id="PTHR22854">
    <property type="entry name" value="TRYPTOPHAN BIOSYNTHESIS PROTEIN"/>
    <property type="match status" value="1"/>
</dbReference>
<dbReference type="Pfam" id="PF00218">
    <property type="entry name" value="IGPS"/>
    <property type="match status" value="1"/>
</dbReference>
<dbReference type="SUPFAM" id="SSF51366">
    <property type="entry name" value="Ribulose-phoshate binding barrel"/>
    <property type="match status" value="1"/>
</dbReference>
<dbReference type="PROSITE" id="PS00614">
    <property type="entry name" value="IGPS"/>
    <property type="match status" value="1"/>
</dbReference>
<evidence type="ECO:0000255" key="1">
    <source>
        <dbReference type="HAMAP-Rule" id="MF_00134"/>
    </source>
</evidence>
<feature type="chain" id="PRO_0000154256" description="Indole-3-glycerol phosphate synthase">
    <location>
        <begin position="1"/>
        <end position="262"/>
    </location>
</feature>
<comment type="catalytic activity">
    <reaction evidence="1">
        <text>1-(2-carboxyphenylamino)-1-deoxy-D-ribulose 5-phosphate + H(+) = (1S,2R)-1-C-(indol-3-yl)glycerol 3-phosphate + CO2 + H2O</text>
        <dbReference type="Rhea" id="RHEA:23476"/>
        <dbReference type="ChEBI" id="CHEBI:15377"/>
        <dbReference type="ChEBI" id="CHEBI:15378"/>
        <dbReference type="ChEBI" id="CHEBI:16526"/>
        <dbReference type="ChEBI" id="CHEBI:58613"/>
        <dbReference type="ChEBI" id="CHEBI:58866"/>
        <dbReference type="EC" id="4.1.1.48"/>
    </reaction>
</comment>
<comment type="pathway">
    <text evidence="1">Amino-acid biosynthesis; L-tryptophan biosynthesis; L-tryptophan from chorismate: step 4/5.</text>
</comment>
<comment type="similarity">
    <text evidence="1">Belongs to the TrpC family.</text>
</comment>
<keyword id="KW-0028">Amino-acid biosynthesis</keyword>
<keyword id="KW-0057">Aromatic amino acid biosynthesis</keyword>
<keyword id="KW-0210">Decarboxylase</keyword>
<keyword id="KW-0456">Lyase</keyword>
<keyword id="KW-1185">Reference proteome</keyword>
<keyword id="KW-0822">Tryptophan biosynthesis</keyword>
<reference key="1">
    <citation type="journal article" date="2005" name="J. Bacteriol.">
        <title>Insights on evolution of virulence and resistance from the complete genome analysis of an early methicillin-resistant Staphylococcus aureus strain and a biofilm-producing methicillin-resistant Staphylococcus epidermidis strain.</title>
        <authorList>
            <person name="Gill S.R."/>
            <person name="Fouts D.E."/>
            <person name="Archer G.L."/>
            <person name="Mongodin E.F."/>
            <person name="DeBoy R.T."/>
            <person name="Ravel J."/>
            <person name="Paulsen I.T."/>
            <person name="Kolonay J.F."/>
            <person name="Brinkac L.M."/>
            <person name="Beanan M.J."/>
            <person name="Dodson R.J."/>
            <person name="Daugherty S.C."/>
            <person name="Madupu R."/>
            <person name="Angiuoli S.V."/>
            <person name="Durkin A.S."/>
            <person name="Haft D.H."/>
            <person name="Vamathevan J.J."/>
            <person name="Khouri H."/>
            <person name="Utterback T.R."/>
            <person name="Lee C."/>
            <person name="Dimitrov G."/>
            <person name="Jiang L."/>
            <person name="Qin H."/>
            <person name="Weidman J."/>
            <person name="Tran K."/>
            <person name="Kang K.H."/>
            <person name="Hance I.R."/>
            <person name="Nelson K.E."/>
            <person name="Fraser C.M."/>
        </authorList>
    </citation>
    <scope>NUCLEOTIDE SEQUENCE [LARGE SCALE GENOMIC DNA]</scope>
    <source>
        <strain>ATCC 35984 / DSM 28319 / BCRC 17069 / CCUG 31568 / BM 3577 / RP62A</strain>
    </source>
</reference>
<accession>Q5HPH2</accession>
<name>TRPC_STAEQ</name>
<organism>
    <name type="scientific">Staphylococcus epidermidis (strain ATCC 35984 / DSM 28319 / BCRC 17069 / CCUG 31568 / BM 3577 / RP62A)</name>
    <dbReference type="NCBI Taxonomy" id="176279"/>
    <lineage>
        <taxon>Bacteria</taxon>
        <taxon>Bacillati</taxon>
        <taxon>Bacillota</taxon>
        <taxon>Bacilli</taxon>
        <taxon>Bacillales</taxon>
        <taxon>Staphylococcaceae</taxon>
        <taxon>Staphylococcus</taxon>
    </lineage>
</organism>
<sequence>MTILNEIIEYKKTLLERKYYDKKLEILQDNGNVKRRKLIDSLNYDRTLSVIAEIKSKSPSVPQLPQRDLVQQVKDYQKYGANAISILTDEKYFGGSFERLNQLSKITSLPVLCKDFIIDKIQIDVAKRAGASIILLIVNILSDDQLKELYSYATNHNLEALVEVHTIRELERAHQINPKIIGVNNRDLKRFETDVLHTNKLLKFKKSNCCYISESGIHTKEDVEKIVDSSIDGLLVGEALMKTNDLSQFLPSLKLKKNLYDS</sequence>
<protein>
    <recommendedName>
        <fullName evidence="1">Indole-3-glycerol phosphate synthase</fullName>
        <shortName evidence="1">IGPS</shortName>
        <ecNumber evidence="1">4.1.1.48</ecNumber>
    </recommendedName>
</protein>